<name>RIMK_HAEDU</name>
<reference key="1">
    <citation type="submission" date="2003-06" db="EMBL/GenBank/DDBJ databases">
        <title>The complete genome sequence of Haemophilus ducreyi.</title>
        <authorList>
            <person name="Munson R.S. Jr."/>
            <person name="Ray W.C."/>
            <person name="Mahairas G."/>
            <person name="Sabo P."/>
            <person name="Mungur R."/>
            <person name="Johnson L."/>
            <person name="Nguyen D."/>
            <person name="Wang J."/>
            <person name="Forst C."/>
            <person name="Hood L."/>
        </authorList>
    </citation>
    <scope>NUCLEOTIDE SEQUENCE [LARGE SCALE GENOMIC DNA]</scope>
    <source>
        <strain>35000HP / ATCC 700724</strain>
    </source>
</reference>
<evidence type="ECO:0000255" key="1">
    <source>
        <dbReference type="HAMAP-Rule" id="MF_01552"/>
    </source>
</evidence>
<dbReference type="EC" id="6.3.2.-" evidence="1"/>
<dbReference type="EMBL" id="AE017143">
    <property type="protein sequence ID" value="AAP96074.1"/>
    <property type="molecule type" value="Genomic_DNA"/>
</dbReference>
<dbReference type="RefSeq" id="WP_010945123.1">
    <property type="nucleotide sequence ID" value="NC_002940.2"/>
</dbReference>
<dbReference type="SMR" id="Q7VLZ5"/>
<dbReference type="STRING" id="233412.HD_1238"/>
<dbReference type="DNASU" id="1491147"/>
<dbReference type="KEGG" id="hdu:HD_1238"/>
<dbReference type="eggNOG" id="COG0189">
    <property type="taxonomic scope" value="Bacteria"/>
</dbReference>
<dbReference type="HOGENOM" id="CLU_054353_0_1_6"/>
<dbReference type="OrthoDB" id="3865600at2"/>
<dbReference type="Proteomes" id="UP000001022">
    <property type="component" value="Chromosome"/>
</dbReference>
<dbReference type="GO" id="GO:0005737">
    <property type="term" value="C:cytoplasm"/>
    <property type="evidence" value="ECO:0007669"/>
    <property type="project" value="TreeGrafter"/>
</dbReference>
<dbReference type="GO" id="GO:0005524">
    <property type="term" value="F:ATP binding"/>
    <property type="evidence" value="ECO:0007669"/>
    <property type="project" value="UniProtKB-UniRule"/>
</dbReference>
<dbReference type="GO" id="GO:0046872">
    <property type="term" value="F:metal ion binding"/>
    <property type="evidence" value="ECO:0007669"/>
    <property type="project" value="UniProtKB-KW"/>
</dbReference>
<dbReference type="GO" id="GO:0018169">
    <property type="term" value="F:ribosomal S6-glutamic acid ligase activity"/>
    <property type="evidence" value="ECO:0007669"/>
    <property type="project" value="TreeGrafter"/>
</dbReference>
<dbReference type="GO" id="GO:0036211">
    <property type="term" value="P:protein modification process"/>
    <property type="evidence" value="ECO:0007669"/>
    <property type="project" value="InterPro"/>
</dbReference>
<dbReference type="GO" id="GO:0009432">
    <property type="term" value="P:SOS response"/>
    <property type="evidence" value="ECO:0007669"/>
    <property type="project" value="TreeGrafter"/>
</dbReference>
<dbReference type="GO" id="GO:0006412">
    <property type="term" value="P:translation"/>
    <property type="evidence" value="ECO:0007669"/>
    <property type="project" value="UniProtKB-KW"/>
</dbReference>
<dbReference type="Gene3D" id="3.40.50.20">
    <property type="match status" value="1"/>
</dbReference>
<dbReference type="Gene3D" id="3.30.1490.20">
    <property type="entry name" value="ATP-grasp fold, A domain"/>
    <property type="match status" value="1"/>
</dbReference>
<dbReference type="Gene3D" id="3.30.470.20">
    <property type="entry name" value="ATP-grasp fold, B domain"/>
    <property type="match status" value="1"/>
</dbReference>
<dbReference type="HAMAP" id="MF_01552">
    <property type="entry name" value="RimK"/>
    <property type="match status" value="1"/>
</dbReference>
<dbReference type="InterPro" id="IPR011761">
    <property type="entry name" value="ATP-grasp"/>
</dbReference>
<dbReference type="InterPro" id="IPR013651">
    <property type="entry name" value="ATP-grasp_RimK-type"/>
</dbReference>
<dbReference type="InterPro" id="IPR013815">
    <property type="entry name" value="ATP_grasp_subdomain_1"/>
</dbReference>
<dbReference type="InterPro" id="IPR023533">
    <property type="entry name" value="RimK"/>
</dbReference>
<dbReference type="InterPro" id="IPR041107">
    <property type="entry name" value="Rimk_N"/>
</dbReference>
<dbReference type="InterPro" id="IPR004666">
    <property type="entry name" value="Rp_bS6_RimK/Lys_biosynth_LsyX"/>
</dbReference>
<dbReference type="NCBIfam" id="TIGR00768">
    <property type="entry name" value="rimK_fam"/>
    <property type="match status" value="1"/>
</dbReference>
<dbReference type="PANTHER" id="PTHR21621:SF7">
    <property type="entry name" value="RIBOSOMAL PROTEIN BS6--L-GLUTAMATE LIGASE"/>
    <property type="match status" value="1"/>
</dbReference>
<dbReference type="PANTHER" id="PTHR21621">
    <property type="entry name" value="RIBOSOMAL PROTEIN S6 MODIFICATION PROTEIN"/>
    <property type="match status" value="1"/>
</dbReference>
<dbReference type="Pfam" id="PF08443">
    <property type="entry name" value="RimK"/>
    <property type="match status" value="1"/>
</dbReference>
<dbReference type="Pfam" id="PF18030">
    <property type="entry name" value="Rimk_N"/>
    <property type="match status" value="1"/>
</dbReference>
<dbReference type="SUPFAM" id="SSF56059">
    <property type="entry name" value="Glutathione synthetase ATP-binding domain-like"/>
    <property type="match status" value="1"/>
</dbReference>
<dbReference type="PROSITE" id="PS50975">
    <property type="entry name" value="ATP_GRASP"/>
    <property type="match status" value="1"/>
</dbReference>
<proteinExistence type="inferred from homology"/>
<protein>
    <recommendedName>
        <fullName evidence="1">Probable alpha-L-glutamate ligase</fullName>
        <ecNumber evidence="1">6.3.2.-</ecNumber>
    </recommendedName>
</protein>
<gene>
    <name evidence="1" type="primary">rimK</name>
    <name type="ordered locus">HD_1238</name>
</gene>
<keyword id="KW-0067">ATP-binding</keyword>
<keyword id="KW-0436">Ligase</keyword>
<keyword id="KW-0460">Magnesium</keyword>
<keyword id="KW-0464">Manganese</keyword>
<keyword id="KW-0479">Metal-binding</keyword>
<keyword id="KW-0547">Nucleotide-binding</keyword>
<keyword id="KW-0648">Protein biosynthesis</keyword>
<keyword id="KW-1185">Reference proteome</keyword>
<feature type="chain" id="PRO_0000205458" description="Probable alpha-L-glutamate ligase">
    <location>
        <begin position="1"/>
        <end position="305"/>
    </location>
</feature>
<feature type="domain" description="ATP-grasp" evidence="1">
    <location>
        <begin position="119"/>
        <end position="301"/>
    </location>
</feature>
<feature type="binding site" evidence="1">
    <location>
        <position position="155"/>
    </location>
    <ligand>
        <name>ATP</name>
        <dbReference type="ChEBI" id="CHEBI:30616"/>
    </ligand>
</feature>
<feature type="binding site" evidence="1">
    <location>
        <begin position="192"/>
        <end position="193"/>
    </location>
    <ligand>
        <name>ATP</name>
        <dbReference type="ChEBI" id="CHEBI:30616"/>
    </ligand>
</feature>
<feature type="binding site" evidence="1">
    <location>
        <position position="201"/>
    </location>
    <ligand>
        <name>ATP</name>
        <dbReference type="ChEBI" id="CHEBI:30616"/>
    </ligand>
</feature>
<feature type="binding site" evidence="1">
    <location>
        <begin position="225"/>
        <end position="227"/>
    </location>
    <ligand>
        <name>ATP</name>
        <dbReference type="ChEBI" id="CHEBI:30616"/>
    </ligand>
</feature>
<feature type="binding site" evidence="1">
    <location>
        <position position="262"/>
    </location>
    <ligand>
        <name>Mg(2+)</name>
        <dbReference type="ChEBI" id="CHEBI:18420"/>
        <label>1</label>
    </ligand>
</feature>
<feature type="binding site" evidence="1">
    <location>
        <position position="262"/>
    </location>
    <ligand>
        <name>Mn(2+)</name>
        <dbReference type="ChEBI" id="CHEBI:29035"/>
        <label>1</label>
    </ligand>
</feature>
<feature type="binding site" evidence="1">
    <location>
        <position position="274"/>
    </location>
    <ligand>
        <name>Mg(2+)</name>
        <dbReference type="ChEBI" id="CHEBI:18420"/>
        <label>1</label>
    </ligand>
</feature>
<feature type="binding site" evidence="1">
    <location>
        <position position="274"/>
    </location>
    <ligand>
        <name>Mg(2+)</name>
        <dbReference type="ChEBI" id="CHEBI:18420"/>
        <label>2</label>
    </ligand>
</feature>
<feature type="binding site" evidence="1">
    <location>
        <position position="274"/>
    </location>
    <ligand>
        <name>Mn(2+)</name>
        <dbReference type="ChEBI" id="CHEBI:29035"/>
        <label>1</label>
    </ligand>
</feature>
<feature type="binding site" evidence="1">
    <location>
        <position position="274"/>
    </location>
    <ligand>
        <name>Mn(2+)</name>
        <dbReference type="ChEBI" id="CHEBI:29035"/>
        <label>2</label>
    </ligand>
</feature>
<feature type="binding site" evidence="1">
    <location>
        <position position="276"/>
    </location>
    <ligand>
        <name>Mg(2+)</name>
        <dbReference type="ChEBI" id="CHEBI:18420"/>
        <label>2</label>
    </ligand>
</feature>
<feature type="binding site" evidence="1">
    <location>
        <position position="276"/>
    </location>
    <ligand>
        <name>Mn(2+)</name>
        <dbReference type="ChEBI" id="CHEBI:29035"/>
        <label>2</label>
    </ligand>
</feature>
<accession>Q7VLZ5</accession>
<organism>
    <name type="scientific">Haemophilus ducreyi (strain 35000HP / ATCC 700724)</name>
    <dbReference type="NCBI Taxonomy" id="233412"/>
    <lineage>
        <taxon>Bacteria</taxon>
        <taxon>Pseudomonadati</taxon>
        <taxon>Pseudomonadota</taxon>
        <taxon>Gammaproteobacteria</taxon>
        <taxon>Pasteurellales</taxon>
        <taxon>Pasteurellaceae</taxon>
        <taxon>Haemophilus</taxon>
    </lineage>
</organism>
<sequence length="305" mass="33378">MKILMLCREPRLYSCQRLKQACQDRNIQLDILDPNRMLIKLAVIDAQMQAQLYYQAGEIYDKCRAEPSLLAEYDAVLPRFGVSSTMMGCRVLDYFAAKKVVILNNSTAFRLARDKWSSLQVLAAQHIPIPTSSFAGALFSTAAHISQHRIPLVIKTCSGSQGVGVMLSESKVHSVSLLQTLQQAKVDNLLQDFVVEARGQDIRAFVIGDRVVAAIERNGLENDFRANIHQGGSASVIQLNTAEQQLAVLAAKTIGLDVAGVDLIRSNKGLLVLEVNACPGLDGIEKASKLDIAGLIIDYLLAMKK</sequence>
<comment type="cofactor">
    <cofactor evidence="1">
        <name>Mg(2+)</name>
        <dbReference type="ChEBI" id="CHEBI:18420"/>
    </cofactor>
    <cofactor evidence="1">
        <name>Mn(2+)</name>
        <dbReference type="ChEBI" id="CHEBI:29035"/>
    </cofactor>
    <text evidence="1">Binds 2 magnesium or manganese ions per subunit.</text>
</comment>
<comment type="similarity">
    <text evidence="1">Belongs to the RimK family.</text>
</comment>